<organism>
    <name type="scientific">Homo sapiens</name>
    <name type="common">Human</name>
    <dbReference type="NCBI Taxonomy" id="9606"/>
    <lineage>
        <taxon>Eukaryota</taxon>
        <taxon>Metazoa</taxon>
        <taxon>Chordata</taxon>
        <taxon>Craniata</taxon>
        <taxon>Vertebrata</taxon>
        <taxon>Euteleostomi</taxon>
        <taxon>Mammalia</taxon>
        <taxon>Eutheria</taxon>
        <taxon>Euarchontoglires</taxon>
        <taxon>Primates</taxon>
        <taxon>Haplorrhini</taxon>
        <taxon>Catarrhini</taxon>
        <taxon>Hominidae</taxon>
        <taxon>Homo</taxon>
    </lineage>
</organism>
<keyword id="KW-0025">Alternative splicing</keyword>
<keyword id="KW-0158">Chromosome</keyword>
<keyword id="KW-0238">DNA-binding</keyword>
<keyword id="KW-0488">Methylation</keyword>
<keyword id="KW-0539">Nucleus</keyword>
<keyword id="KW-0597">Phosphoprotein</keyword>
<keyword id="KW-1267">Proteomics identification</keyword>
<keyword id="KW-1185">Reference proteome</keyword>
<keyword id="KW-0804">Transcription</keyword>
<keyword id="KW-0805">Transcription regulation</keyword>
<accession>O94842</accession>
<accession>B4DPY8</accession>
<accession>B4DSM0</accession>
<accession>E7EV69</accession>
<evidence type="ECO:0000250" key="1">
    <source>
        <dbReference type="UniProtKB" id="Q8BU11"/>
    </source>
</evidence>
<evidence type="ECO:0000255" key="2"/>
<evidence type="ECO:0000255" key="3">
    <source>
        <dbReference type="PROSITE-ProRule" id="PRU00267"/>
    </source>
</evidence>
<evidence type="ECO:0000256" key="4">
    <source>
        <dbReference type="SAM" id="MobiDB-lite"/>
    </source>
</evidence>
<evidence type="ECO:0000269" key="5">
    <source>
    </source>
</evidence>
<evidence type="ECO:0000269" key="6">
    <source>
    </source>
</evidence>
<evidence type="ECO:0000269" key="7">
    <source>
    </source>
</evidence>
<evidence type="ECO:0000269" key="8">
    <source>
    </source>
</evidence>
<evidence type="ECO:0000303" key="9">
    <source>
    </source>
</evidence>
<evidence type="ECO:0000303" key="10">
    <source>
    </source>
</evidence>
<evidence type="ECO:0000303" key="11">
    <source>
    </source>
</evidence>
<evidence type="ECO:0000305" key="12"/>
<evidence type="ECO:0000305" key="13">
    <source>
    </source>
</evidence>
<evidence type="ECO:0000312" key="14">
    <source>
        <dbReference type="HGNC" id="HGNC:20161"/>
    </source>
</evidence>
<evidence type="ECO:0007744" key="15">
    <source>
    </source>
</evidence>
<evidence type="ECO:0007744" key="16">
    <source>
    </source>
</evidence>
<evidence type="ECO:0007744" key="17">
    <source>
    </source>
</evidence>
<evidence type="ECO:0007744" key="18">
    <source>
    </source>
</evidence>
<evidence type="ECO:0007744" key="19">
    <source>
    </source>
</evidence>
<reference key="1">
    <citation type="journal article" date="1998" name="DNA Res.">
        <title>Prediction of the coding sequences of unidentified human genes. XI. The complete sequences of 100 new cDNA clones from brain which code for large proteins in vitro.</title>
        <authorList>
            <person name="Nagase T."/>
            <person name="Ishikawa K."/>
            <person name="Suyama M."/>
            <person name="Kikuno R."/>
            <person name="Miyajima N."/>
            <person name="Tanaka A."/>
            <person name="Kotani H."/>
            <person name="Nomura N."/>
            <person name="Ohara O."/>
        </authorList>
    </citation>
    <scope>NUCLEOTIDE SEQUENCE [LARGE SCALE MRNA] (ISOFORM 1)</scope>
    <source>
        <tissue>Brain</tissue>
    </source>
</reference>
<reference key="2">
    <citation type="journal article" date="2004" name="Nat. Genet.">
        <title>Complete sequencing and characterization of 21,243 full-length human cDNAs.</title>
        <authorList>
            <person name="Ota T."/>
            <person name="Suzuki Y."/>
            <person name="Nishikawa T."/>
            <person name="Otsuki T."/>
            <person name="Sugiyama T."/>
            <person name="Irie R."/>
            <person name="Wakamatsu A."/>
            <person name="Hayashi K."/>
            <person name="Sato H."/>
            <person name="Nagai K."/>
            <person name="Kimura K."/>
            <person name="Makita H."/>
            <person name="Sekine M."/>
            <person name="Obayashi M."/>
            <person name="Nishi T."/>
            <person name="Shibahara T."/>
            <person name="Tanaka T."/>
            <person name="Ishii S."/>
            <person name="Yamamoto J."/>
            <person name="Saito K."/>
            <person name="Kawai Y."/>
            <person name="Isono Y."/>
            <person name="Nakamura Y."/>
            <person name="Nagahari K."/>
            <person name="Murakami K."/>
            <person name="Yasuda T."/>
            <person name="Iwayanagi T."/>
            <person name="Wagatsuma M."/>
            <person name="Shiratori A."/>
            <person name="Sudo H."/>
            <person name="Hosoiri T."/>
            <person name="Kaku Y."/>
            <person name="Kodaira H."/>
            <person name="Kondo H."/>
            <person name="Sugawara M."/>
            <person name="Takahashi M."/>
            <person name="Kanda K."/>
            <person name="Yokoi T."/>
            <person name="Furuya T."/>
            <person name="Kikkawa E."/>
            <person name="Omura Y."/>
            <person name="Abe K."/>
            <person name="Kamihara K."/>
            <person name="Katsuta N."/>
            <person name="Sato K."/>
            <person name="Tanikawa M."/>
            <person name="Yamazaki M."/>
            <person name="Ninomiya K."/>
            <person name="Ishibashi T."/>
            <person name="Yamashita H."/>
            <person name="Murakawa K."/>
            <person name="Fujimori K."/>
            <person name="Tanai H."/>
            <person name="Kimata M."/>
            <person name="Watanabe M."/>
            <person name="Hiraoka S."/>
            <person name="Chiba Y."/>
            <person name="Ishida S."/>
            <person name="Ono Y."/>
            <person name="Takiguchi S."/>
            <person name="Watanabe S."/>
            <person name="Yosida M."/>
            <person name="Hotuta T."/>
            <person name="Kusano J."/>
            <person name="Kanehori K."/>
            <person name="Takahashi-Fujii A."/>
            <person name="Hara H."/>
            <person name="Tanase T.-O."/>
            <person name="Nomura Y."/>
            <person name="Togiya S."/>
            <person name="Komai F."/>
            <person name="Hara R."/>
            <person name="Takeuchi K."/>
            <person name="Arita M."/>
            <person name="Imose N."/>
            <person name="Musashino K."/>
            <person name="Yuuki H."/>
            <person name="Oshima A."/>
            <person name="Sasaki N."/>
            <person name="Aotsuka S."/>
            <person name="Yoshikawa Y."/>
            <person name="Matsunawa H."/>
            <person name="Ichihara T."/>
            <person name="Shiohata N."/>
            <person name="Sano S."/>
            <person name="Moriya S."/>
            <person name="Momiyama H."/>
            <person name="Satoh N."/>
            <person name="Takami S."/>
            <person name="Terashima Y."/>
            <person name="Suzuki O."/>
            <person name="Nakagawa S."/>
            <person name="Senoh A."/>
            <person name="Mizoguchi H."/>
            <person name="Goto Y."/>
            <person name="Shimizu F."/>
            <person name="Wakebe H."/>
            <person name="Hishigaki H."/>
            <person name="Watanabe T."/>
            <person name="Sugiyama A."/>
            <person name="Takemoto M."/>
            <person name="Kawakami B."/>
            <person name="Yamazaki M."/>
            <person name="Watanabe K."/>
            <person name="Kumagai A."/>
            <person name="Itakura S."/>
            <person name="Fukuzumi Y."/>
            <person name="Fujimori Y."/>
            <person name="Komiyama M."/>
            <person name="Tashiro H."/>
            <person name="Tanigami A."/>
            <person name="Fujiwara T."/>
            <person name="Ono T."/>
            <person name="Yamada K."/>
            <person name="Fujii Y."/>
            <person name="Ozaki K."/>
            <person name="Hirao M."/>
            <person name="Ohmori Y."/>
            <person name="Kawabata A."/>
            <person name="Hikiji T."/>
            <person name="Kobatake N."/>
            <person name="Inagaki H."/>
            <person name="Ikema Y."/>
            <person name="Okamoto S."/>
            <person name="Okitani R."/>
            <person name="Kawakami T."/>
            <person name="Noguchi S."/>
            <person name="Itoh T."/>
            <person name="Shigeta K."/>
            <person name="Senba T."/>
            <person name="Matsumura K."/>
            <person name="Nakajima Y."/>
            <person name="Mizuno T."/>
            <person name="Morinaga M."/>
            <person name="Sasaki M."/>
            <person name="Togashi T."/>
            <person name="Oyama M."/>
            <person name="Hata H."/>
            <person name="Watanabe M."/>
            <person name="Komatsu T."/>
            <person name="Mizushima-Sugano J."/>
            <person name="Satoh T."/>
            <person name="Shirai Y."/>
            <person name="Takahashi Y."/>
            <person name="Nakagawa K."/>
            <person name="Okumura K."/>
            <person name="Nagase T."/>
            <person name="Nomura N."/>
            <person name="Kikuchi H."/>
            <person name="Masuho Y."/>
            <person name="Yamashita R."/>
            <person name="Nakai K."/>
            <person name="Yada T."/>
            <person name="Nakamura Y."/>
            <person name="Ohara O."/>
            <person name="Isogai T."/>
            <person name="Sugano S."/>
        </authorList>
    </citation>
    <scope>NUCLEOTIDE SEQUENCE [LARGE SCALE MRNA] (ISOFORMS 2 AND 3)</scope>
    <source>
        <tissue>Brain</tissue>
    </source>
</reference>
<reference key="3">
    <citation type="journal article" date="2003" name="Nature">
        <title>The DNA sequence and analysis of human chromosome 14.</title>
        <authorList>
            <person name="Heilig R."/>
            <person name="Eckenberg R."/>
            <person name="Petit J.-L."/>
            <person name="Fonknechten N."/>
            <person name="Da Silva C."/>
            <person name="Cattolico L."/>
            <person name="Levy M."/>
            <person name="Barbe V."/>
            <person name="De Berardinis V."/>
            <person name="Ureta-Vidal A."/>
            <person name="Pelletier E."/>
            <person name="Vico V."/>
            <person name="Anthouard V."/>
            <person name="Rowen L."/>
            <person name="Madan A."/>
            <person name="Qin S."/>
            <person name="Sun H."/>
            <person name="Du H."/>
            <person name="Pepin K."/>
            <person name="Artiguenave F."/>
            <person name="Robert C."/>
            <person name="Cruaud C."/>
            <person name="Bruels T."/>
            <person name="Jaillon O."/>
            <person name="Friedlander L."/>
            <person name="Samson G."/>
            <person name="Brottier P."/>
            <person name="Cure S."/>
            <person name="Segurens B."/>
            <person name="Aniere F."/>
            <person name="Samain S."/>
            <person name="Crespeau H."/>
            <person name="Abbasi N."/>
            <person name="Aiach N."/>
            <person name="Boscus D."/>
            <person name="Dickhoff R."/>
            <person name="Dors M."/>
            <person name="Dubois I."/>
            <person name="Friedman C."/>
            <person name="Gouyvenoux M."/>
            <person name="James R."/>
            <person name="Madan A."/>
            <person name="Mairey-Estrada B."/>
            <person name="Mangenot S."/>
            <person name="Martins N."/>
            <person name="Menard M."/>
            <person name="Oztas S."/>
            <person name="Ratcliffe A."/>
            <person name="Shaffer T."/>
            <person name="Trask B."/>
            <person name="Vacherie B."/>
            <person name="Bellemere C."/>
            <person name="Belser C."/>
            <person name="Besnard-Gonnet M."/>
            <person name="Bartol-Mavel D."/>
            <person name="Boutard M."/>
            <person name="Briez-Silla S."/>
            <person name="Combette S."/>
            <person name="Dufosse-Laurent V."/>
            <person name="Ferron C."/>
            <person name="Lechaplais C."/>
            <person name="Louesse C."/>
            <person name="Muselet D."/>
            <person name="Magdelenat G."/>
            <person name="Pateau E."/>
            <person name="Petit E."/>
            <person name="Sirvain-Trukniewicz P."/>
            <person name="Trybou A."/>
            <person name="Vega-Czarny N."/>
            <person name="Bataille E."/>
            <person name="Bluet E."/>
            <person name="Bordelais I."/>
            <person name="Dubois M."/>
            <person name="Dumont C."/>
            <person name="Guerin T."/>
            <person name="Haffray S."/>
            <person name="Hammadi R."/>
            <person name="Muanga J."/>
            <person name="Pellouin V."/>
            <person name="Robert D."/>
            <person name="Wunderle E."/>
            <person name="Gauguet G."/>
            <person name="Roy A."/>
            <person name="Sainte-Marthe L."/>
            <person name="Verdier J."/>
            <person name="Verdier-Discala C."/>
            <person name="Hillier L.W."/>
            <person name="Fulton L."/>
            <person name="McPherson J."/>
            <person name="Matsuda F."/>
            <person name="Wilson R."/>
            <person name="Scarpelli C."/>
            <person name="Gyapay G."/>
            <person name="Wincker P."/>
            <person name="Saurin W."/>
            <person name="Quetier F."/>
            <person name="Waterston R."/>
            <person name="Hood L."/>
            <person name="Weissenbach J."/>
        </authorList>
    </citation>
    <scope>NUCLEOTIDE SEQUENCE [LARGE SCALE GENOMIC DNA]</scope>
</reference>
<reference key="4">
    <citation type="journal article" date="2004" name="Genome Res.">
        <title>The status, quality, and expansion of the NIH full-length cDNA project: the Mammalian Gene Collection (MGC).</title>
        <authorList>
            <consortium name="The MGC Project Team"/>
        </authorList>
    </citation>
    <scope>NUCLEOTIDE SEQUENCE [LARGE SCALE MRNA] (ISOFORM 1)</scope>
    <source>
        <tissue>Lung</tissue>
    </source>
</reference>
<reference key="5">
    <citation type="journal article" date="2008" name="Proc. Natl. Acad. Sci. U.S.A.">
        <title>A quantitative atlas of mitotic phosphorylation.</title>
        <authorList>
            <person name="Dephoure N."/>
            <person name="Zhou C."/>
            <person name="Villen J."/>
            <person name="Beausoleil S.A."/>
            <person name="Bakalarski C.E."/>
            <person name="Elledge S.J."/>
            <person name="Gygi S.P."/>
        </authorList>
    </citation>
    <scope>PHOSPHORYLATION [LARGE SCALE ANALYSIS] AT SER-178 AND SER-182</scope>
    <scope>IDENTIFICATION BY MASS SPECTROMETRY [LARGE SCALE ANALYSIS]</scope>
    <source>
        <tissue>Cervix carcinoma</tissue>
    </source>
</reference>
<reference key="6">
    <citation type="journal article" date="2009" name="Anal. Chem.">
        <title>Lys-N and trypsin cover complementary parts of the phosphoproteome in a refined SCX-based approach.</title>
        <authorList>
            <person name="Gauci S."/>
            <person name="Helbig A.O."/>
            <person name="Slijper M."/>
            <person name="Krijgsveld J."/>
            <person name="Heck A.J."/>
            <person name="Mohammed S."/>
        </authorList>
    </citation>
    <scope>IDENTIFICATION BY MASS SPECTROMETRY [LARGE SCALE ANALYSIS]</scope>
</reference>
<reference key="7">
    <citation type="journal article" date="2010" name="J. Biol. Chem.">
        <title>Identification and characterization of a novel human PP1 phosphatase complex.</title>
        <authorList>
            <person name="Lee J.H."/>
            <person name="You J."/>
            <person name="Dobrota E."/>
            <person name="Skalnik D.G."/>
        </authorList>
    </citation>
    <scope>IDENTIFICATION IN THE PNUTS-PP1 PHOSPHATASE COMPLEX</scope>
    <scope>FUNCTION</scope>
    <scope>SUBCELLULAR LOCATION</scope>
    <scope>INTERACTION WITH PPP1R10/PNUTS</scope>
</reference>
<reference key="8">
    <citation type="journal article" date="2010" name="Sci. Signal.">
        <title>Quantitative phosphoproteomics reveals widespread full phosphorylation site occupancy during mitosis.</title>
        <authorList>
            <person name="Olsen J.V."/>
            <person name="Vermeulen M."/>
            <person name="Santamaria A."/>
            <person name="Kumar C."/>
            <person name="Miller M.L."/>
            <person name="Jensen L.J."/>
            <person name="Gnad F."/>
            <person name="Cox J."/>
            <person name="Jensen T.S."/>
            <person name="Nigg E.A."/>
            <person name="Brunak S."/>
            <person name="Mann M."/>
        </authorList>
    </citation>
    <scope>PHOSPHORYLATION [LARGE SCALE ANALYSIS] AT THR-313 AND SER-315</scope>
    <scope>IDENTIFICATION BY MASS SPECTROMETRY [LARGE SCALE ANALYSIS]</scope>
    <source>
        <tissue>Cervix carcinoma</tissue>
    </source>
</reference>
<reference key="9">
    <citation type="journal article" date="2011" name="Sci. Signal.">
        <title>System-wide temporal characterization of the proteome and phosphoproteome of human embryonic stem cell differentiation.</title>
        <authorList>
            <person name="Rigbolt K.T."/>
            <person name="Prokhorova T.A."/>
            <person name="Akimov V."/>
            <person name="Henningsen J."/>
            <person name="Johansen P.T."/>
            <person name="Kratchmarova I."/>
            <person name="Kassem M."/>
            <person name="Mann M."/>
            <person name="Olsen J.V."/>
            <person name="Blagoev B."/>
        </authorList>
    </citation>
    <scope>IDENTIFICATION BY MASS SPECTROMETRY [LARGE SCALE ANALYSIS]</scope>
</reference>
<reference key="10">
    <citation type="journal article" date="2013" name="J. Proteome Res.">
        <title>Toward a comprehensive characterization of a human cancer cell phosphoproteome.</title>
        <authorList>
            <person name="Zhou H."/>
            <person name="Di Palma S."/>
            <person name="Preisinger C."/>
            <person name="Peng M."/>
            <person name="Polat A.N."/>
            <person name="Heck A.J."/>
            <person name="Mohammed S."/>
        </authorList>
    </citation>
    <scope>PHOSPHORYLATION [LARGE SCALE ANALYSIS] AT SER-181 AND SER-182</scope>
    <scope>IDENTIFICATION BY MASS SPECTROMETRY [LARGE SCALE ANALYSIS]</scope>
    <source>
        <tissue>Erythroleukemia</tissue>
    </source>
</reference>
<reference key="11">
    <citation type="journal article" date="2014" name="J. Proteomics">
        <title>An enzyme assisted RP-RPLC approach for in-depth analysis of human liver phosphoproteome.</title>
        <authorList>
            <person name="Bian Y."/>
            <person name="Song C."/>
            <person name="Cheng K."/>
            <person name="Dong M."/>
            <person name="Wang F."/>
            <person name="Huang J."/>
            <person name="Sun D."/>
            <person name="Wang L."/>
            <person name="Ye M."/>
            <person name="Zou H."/>
        </authorList>
    </citation>
    <scope>PHOSPHORYLATION [LARGE SCALE ANALYSIS] AT SER-178; SER-182; SER-533; SER-550; SER-552; SER-560; SER-562 AND SER-567</scope>
    <scope>IDENTIFICATION BY MASS SPECTROMETRY [LARGE SCALE ANALYSIS]</scope>
    <source>
        <tissue>Liver</tissue>
    </source>
</reference>
<reference key="12">
    <citation type="journal article" date="2014" name="Mol. Cell. Proteomics">
        <title>Immunoaffinity enrichment and mass spectrometry analysis of protein methylation.</title>
        <authorList>
            <person name="Guo A."/>
            <person name="Gu H."/>
            <person name="Zhou J."/>
            <person name="Mulhern D."/>
            <person name="Wang Y."/>
            <person name="Lee K.A."/>
            <person name="Yang V."/>
            <person name="Aguiar M."/>
            <person name="Kornhauser J."/>
            <person name="Jia X."/>
            <person name="Ren J."/>
            <person name="Beausoleil S.A."/>
            <person name="Silva J.C."/>
            <person name="Vemulapalli V."/>
            <person name="Bedford M.T."/>
            <person name="Comb M.J."/>
        </authorList>
    </citation>
    <scope>METHYLATION [LARGE SCALE ANALYSIS] AT ARG-481</scope>
    <scope>IDENTIFICATION BY MASS SPECTROMETRY [LARGE SCALE ANALYSIS]</scope>
    <source>
        <tissue>Colon carcinoma</tissue>
    </source>
</reference>
<reference key="13">
    <citation type="journal article" date="2022" name="Cell Metab.">
        <title>TOX4, an insulin receptor-independent regulator of hepatic glucose production, is activated in diabetic liver.</title>
        <authorList>
            <person name="Wang L."/>
            <person name="Yu J."/>
            <person name="Zhou Q."/>
            <person name="Wang X."/>
            <person name="Mukhanova M."/>
            <person name="Du W."/>
            <person name="Sun L."/>
            <person name="Pajvani U.B."/>
            <person name="Accili D."/>
        </authorList>
    </citation>
    <scope>INDUCTION BY DIABETES</scope>
    <scope>TISSUE SPECIFICITY</scope>
</reference>
<reference key="14">
    <citation type="journal article" date="2024" name="Mol. Cell">
        <title>The phosphatase PP1 sustains global transcription by promoting RNA polymerase II pause release.</title>
        <authorList>
            <person name="Wang Z."/>
            <person name="Song A."/>
            <person name="Tao B."/>
            <person name="Miao M."/>
            <person name="Luo Y.Q."/>
            <person name="Wang J."/>
            <person name="Yin Z."/>
            <person name="Xiao R."/>
            <person name="Zhou X."/>
            <person name="Shang X.Y."/>
            <person name="Hu S."/>
            <person name="Liang K."/>
            <person name="Danko C.G."/>
            <person name="Chen F.X."/>
        </authorList>
    </citation>
    <scope>FUNCTION</scope>
    <scope>IDENTIFICATION IN THE PNUTS-PP1 PHOSPHATASE COMPLEX</scope>
</reference>
<reference key="15">
    <citation type="journal article" date="2024" name="Mol. Cell">
        <title>The PNUTS phosphatase complex controls transcription pause release.</title>
        <authorList>
            <person name="Kelley J.R."/>
            <person name="Dimitrova E."/>
            <person name="Maciuszek M."/>
            <person name="Nguyen H.T."/>
            <person name="Szczurek A.T."/>
            <person name="Hughes A.L."/>
            <person name="Blackledge N.P."/>
            <person name="Kettenbach A.N."/>
            <person name="Klose R.J."/>
        </authorList>
    </citation>
    <scope>FUNCTION</scope>
    <scope>IDENTIFICATION IN THE PNUTS-PP1 PHOSPHATASE COMPLEX</scope>
</reference>
<proteinExistence type="evidence at protein level"/>
<comment type="function">
    <text evidence="1 5 7 8">Transcription factor that modulates cell fate reprogramming from the somatic state to the pluripotent and neuronal fate (By similarity). In liver, controls the expression of hormone-regulated gluconeogenic genes such as G6PC1 and PCK1 (By similarity). This regulation is independent of the insulin receptor activation (By similarity). Also acts as a regulatory component of protein phosphatase 1 (PP1) complexes (PubMed:39603239, PubMed:39603240). Component of the PNUTS-PP1 protein phosphatase complex, a PP1 complex that regulates RNA polymerase II transcription pause-release (PubMed:39603239, PubMed:39603240). PNUTS-PP1 also plays a role in the control of chromatin structure and cell cycle progression during the transition from mitosis into interphase (PubMed:20516061).</text>
</comment>
<comment type="activity regulation">
    <text evidence="1">In liver, recruited to target gene promoters following treatment with dexamethasone and cAMP. Binding is decreased in presence of insulin.</text>
</comment>
<comment type="subunit">
    <text evidence="1 5 7 8">Component of the PNUTS-PP1 phosphatase complex, composed of PPP1R10/PNUTS, TOX4, WDR82 and PPP1CA or PPP1CB or PPP1CC. Interacts with PPP1R10/PNUTS (PubMed:20516061, PubMed:39603240, PubMed:39603239). Interacts with FOXO1 and CREB1 (increased by cAMP); FOXO1 and CREB1 are required for full induction of TOX4-dependent activity and the interactions are inhibited by insulin (By similarity).</text>
</comment>
<comment type="interaction">
    <interactant intactId="EBI-948613">
        <id>O94842</id>
    </interactant>
    <interactant intactId="EBI-930964">
        <id>P54253</id>
        <label>ATXN1</label>
    </interactant>
    <organismsDiffer>false</organismsDiffer>
    <experiments>7</experiments>
</comment>
<comment type="interaction">
    <interactant intactId="EBI-948613">
        <id>O94842</id>
    </interactant>
    <interactant intactId="EBI-16429704">
        <id>A0A0S2Z5G4</id>
        <label>BANP</label>
    </interactant>
    <organismsDiffer>false</organismsDiffer>
    <experiments>3</experiments>
</comment>
<comment type="interaction">
    <interactant intactId="EBI-948613">
        <id>O94842</id>
    </interactant>
    <interactant intactId="EBI-16429313">
        <id>B4DE54</id>
        <label>BANP</label>
    </interactant>
    <organismsDiffer>false</organismsDiffer>
    <experiments>3</experiments>
</comment>
<comment type="interaction">
    <interactant intactId="EBI-948613">
        <id>O94842</id>
    </interactant>
    <interactant intactId="EBI-744695">
        <id>Q8N9N5</id>
        <label>BANP</label>
    </interactant>
    <organismsDiffer>false</organismsDiffer>
    <experiments>3</experiments>
</comment>
<comment type="interaction">
    <interactant intactId="EBI-948613">
        <id>O94842</id>
    </interactant>
    <interactant intactId="EBI-11524452">
        <id>Q8N9N5-2</id>
        <label>BANP</label>
    </interactant>
    <organismsDiffer>false</organismsDiffer>
    <experiments>6</experiments>
</comment>
<comment type="interaction">
    <interactant intactId="EBI-948613">
        <id>O94842</id>
    </interactant>
    <interactant intactId="EBI-16429296">
        <id>Q8N9N5-7</id>
        <label>BANP</label>
    </interactant>
    <organismsDiffer>false</organismsDiffer>
    <experiments>3</experiments>
</comment>
<comment type="interaction">
    <interactant intactId="EBI-948613">
        <id>O94842</id>
    </interactant>
    <interactant intactId="EBI-10242151">
        <id>Q53EP0-3</id>
        <label>FNDC3B</label>
    </interactant>
    <organismsDiffer>false</organismsDiffer>
    <experiments>6</experiments>
</comment>
<comment type="interaction">
    <interactant intactId="EBI-948613">
        <id>O94842</id>
    </interactant>
    <interactant intactId="EBI-752301">
        <id>Q8WXD5</id>
        <label>GEMIN6</label>
    </interactant>
    <organismsDiffer>false</organismsDiffer>
    <experiments>3</experiments>
</comment>
<comment type="interaction">
    <interactant intactId="EBI-948613">
        <id>O94842</id>
    </interactant>
    <interactant intactId="EBI-10222416">
        <id>Q01449</id>
        <label>MYL7</label>
    </interactant>
    <organismsDiffer>false</organismsDiffer>
    <experiments>3</experiments>
</comment>
<comment type="interaction">
    <interactant intactId="EBI-948613">
        <id>O94842</id>
    </interactant>
    <interactant intactId="EBI-2798044">
        <id>Q2TAL8</id>
        <label>QRICH1</label>
    </interactant>
    <organismsDiffer>false</organismsDiffer>
    <experiments>5</experiments>
</comment>
<comment type="interaction">
    <interactant intactId="EBI-948613">
        <id>O94842</id>
    </interactant>
    <interactant intactId="EBI-2824328">
        <id>O95947</id>
        <label>TBX6</label>
    </interactant>
    <organismsDiffer>false</organismsDiffer>
    <experiments>7</experiments>
</comment>
<comment type="interaction">
    <interactant intactId="EBI-948613">
        <id>O94842</id>
    </interactant>
    <interactant intactId="EBI-746595">
        <id>Q96E35</id>
        <label>ZMYND19</label>
    </interactant>
    <organismsDiffer>false</organismsDiffer>
    <experiments>6</experiments>
</comment>
<comment type="subcellular location">
    <subcellularLocation>
        <location evidence="13">Nucleus</location>
    </subcellularLocation>
    <subcellularLocation>
        <location evidence="13">Chromosome</location>
    </subcellularLocation>
    <text evidence="1">Associated with chromatin; colocalizes with RNA polymerase II (Pol II) on chromatin.</text>
</comment>
<comment type="alternative products">
    <event type="alternative splicing"/>
    <isoform>
        <id>O94842-1</id>
        <name>1</name>
        <sequence type="displayed"/>
    </isoform>
    <isoform>
        <id>O94842-2</id>
        <name>2</name>
        <sequence type="described" ref="VSP_053873"/>
    </isoform>
    <isoform>
        <id>O94842-3</id>
        <name>3</name>
        <sequence type="described" ref="VSP_055512"/>
    </isoform>
</comment>
<comment type="tissue specificity">
    <text evidence="6">Expressed in liver (at protein level).</text>
</comment>
<comment type="induction">
    <text evidence="6">Expression is highly induced in diabetic liver.</text>
</comment>
<comment type="caution">
    <text evidence="1 7 8 12">The role of TOX4 in RNA polymerase II transcription pause-release is unclear. According to a report, WDR82 promotes transcription pause-release by mediating dephosphorylation of POLR2A at 'Ser-5' of the repetitive C-terminal domain (CTD), thereby preventing transcription elongation (By similarity). According to another report, WDR82 promotes transcription pause-release as part of the PNUTS-PP1 protein phosphatase complex, a PP1 complex that mediates dephosphorylation of proteins involved in transcription, such as AFF4, CDK9, MEPCE, INTS12, NCBP1, POLR2M/GDOWN1 and SUPT6H (PubMed:39603239, PubMed:39603240).</text>
</comment>
<comment type="sequence caution" evidence="12">
    <conflict type="erroneous initiation">
        <sequence resource="EMBL-CDS" id="BAA34457"/>
    </conflict>
    <text>Extended N-terminus.</text>
</comment>
<dbReference type="EMBL" id="AB018280">
    <property type="protein sequence ID" value="BAA34457.2"/>
    <property type="status" value="ALT_INIT"/>
    <property type="molecule type" value="mRNA"/>
</dbReference>
<dbReference type="EMBL" id="AK298555">
    <property type="protein sequence ID" value="BAG60750.1"/>
    <property type="molecule type" value="mRNA"/>
</dbReference>
<dbReference type="EMBL" id="AK299807">
    <property type="protein sequence ID" value="BAG61682.1"/>
    <property type="molecule type" value="mRNA"/>
</dbReference>
<dbReference type="EMBL" id="BC013689">
    <property type="protein sequence ID" value="AAH13689.1"/>
    <property type="molecule type" value="mRNA"/>
</dbReference>
<dbReference type="CCDS" id="CCDS32043.1">
    <molecule id="O94842-1"/>
</dbReference>
<dbReference type="RefSeq" id="NP_001290452.1">
    <molecule id="O94842-2"/>
    <property type="nucleotide sequence ID" value="NM_001303523.2"/>
</dbReference>
<dbReference type="RefSeq" id="NP_055643.1">
    <molecule id="O94842-1"/>
    <property type="nucleotide sequence ID" value="NM_014828.4"/>
</dbReference>
<dbReference type="SMR" id="O94842"/>
<dbReference type="BioGRID" id="115209">
    <property type="interactions" value="151"/>
</dbReference>
<dbReference type="CORUM" id="O94842"/>
<dbReference type="FunCoup" id="O94842">
    <property type="interactions" value="3264"/>
</dbReference>
<dbReference type="IntAct" id="O94842">
    <property type="interactions" value="102"/>
</dbReference>
<dbReference type="MINT" id="O94842"/>
<dbReference type="STRING" id="9606.ENSP00000477868"/>
<dbReference type="GlyCosmos" id="O94842">
    <property type="glycosylation" value="6 sites, 2 glycans"/>
</dbReference>
<dbReference type="GlyGen" id="O94842">
    <property type="glycosylation" value="13 sites, 2 O-linked glycans (12 sites)"/>
</dbReference>
<dbReference type="iPTMnet" id="O94842"/>
<dbReference type="PhosphoSitePlus" id="O94842"/>
<dbReference type="SwissPalm" id="O94842"/>
<dbReference type="BioMuta" id="TOX4"/>
<dbReference type="jPOST" id="O94842"/>
<dbReference type="MassIVE" id="O94842"/>
<dbReference type="PaxDb" id="9606-ENSP00000477868"/>
<dbReference type="PeptideAtlas" id="O94842"/>
<dbReference type="ProteomicsDB" id="4828"/>
<dbReference type="ProteomicsDB" id="50477">
    <molecule id="O94842-1"/>
</dbReference>
<dbReference type="Pumba" id="O94842"/>
<dbReference type="Antibodypedia" id="7517">
    <property type="antibodies" value="126 antibodies from 17 providers"/>
</dbReference>
<dbReference type="DNASU" id="9878"/>
<dbReference type="Ensembl" id="ENST00000448790.7">
    <molecule id="O94842-1"/>
    <property type="protein sequence ID" value="ENSP00000393080.3"/>
    <property type="gene ID" value="ENSG00000092203.15"/>
</dbReference>
<dbReference type="Ensembl" id="ENST00000613569.4">
    <molecule id="O94842-1"/>
    <property type="protein sequence ID" value="ENSP00000477868.1"/>
    <property type="gene ID" value="ENSG00000092203.15"/>
</dbReference>
<dbReference type="GeneID" id="9878"/>
<dbReference type="KEGG" id="hsa:9878"/>
<dbReference type="MANE-Select" id="ENST00000448790.7">
    <property type="protein sequence ID" value="ENSP00000393080.3"/>
    <property type="RefSeq nucleotide sequence ID" value="NM_014828.4"/>
    <property type="RefSeq protein sequence ID" value="NP_055643.1"/>
</dbReference>
<dbReference type="UCSC" id="uc058zcl.1">
    <molecule id="O94842-1"/>
    <property type="organism name" value="human"/>
</dbReference>
<dbReference type="AGR" id="HGNC:20161"/>
<dbReference type="CTD" id="9878"/>
<dbReference type="DisGeNET" id="9878"/>
<dbReference type="GeneCards" id="TOX4"/>
<dbReference type="HGNC" id="HGNC:20161">
    <property type="gene designation" value="TOX4"/>
</dbReference>
<dbReference type="HPA" id="ENSG00000092203">
    <property type="expression patterns" value="Low tissue specificity"/>
</dbReference>
<dbReference type="MIM" id="614032">
    <property type="type" value="gene"/>
</dbReference>
<dbReference type="neXtProt" id="NX_O94842"/>
<dbReference type="OpenTargets" id="ENSG00000092203"/>
<dbReference type="PharmGKB" id="PA162406753"/>
<dbReference type="VEuPathDB" id="HostDB:ENSG00000092203"/>
<dbReference type="eggNOG" id="KOG0381">
    <property type="taxonomic scope" value="Eukaryota"/>
</dbReference>
<dbReference type="GeneTree" id="ENSGT00940000154888"/>
<dbReference type="HOGENOM" id="CLU_030650_0_0_1"/>
<dbReference type="InParanoid" id="O94842"/>
<dbReference type="OMA" id="FLSGAEX"/>
<dbReference type="OrthoDB" id="10027956at2759"/>
<dbReference type="PAN-GO" id="O94842">
    <property type="GO annotations" value="3 GO annotations based on evolutionary models"/>
</dbReference>
<dbReference type="PhylomeDB" id="O94842"/>
<dbReference type="TreeFam" id="TF106481"/>
<dbReference type="PathwayCommons" id="O94842"/>
<dbReference type="SignaLink" id="O94842"/>
<dbReference type="BioGRID-ORCS" id="9878">
    <property type="hits" value="79 hits in 1188 CRISPR screens"/>
</dbReference>
<dbReference type="ChiTaRS" id="TOX4">
    <property type="organism name" value="human"/>
</dbReference>
<dbReference type="GeneWiki" id="TOX4"/>
<dbReference type="GenomeRNAi" id="9878"/>
<dbReference type="Pharos" id="O94842">
    <property type="development level" value="Tbio"/>
</dbReference>
<dbReference type="PRO" id="PR:O94842"/>
<dbReference type="Proteomes" id="UP000005640">
    <property type="component" value="Chromosome 14"/>
</dbReference>
<dbReference type="RNAct" id="O94842">
    <property type="molecule type" value="protein"/>
</dbReference>
<dbReference type="Bgee" id="ENSG00000092203">
    <property type="expression patterns" value="Expressed in colonic epithelium and 209 other cell types or tissues"/>
</dbReference>
<dbReference type="ExpressionAtlas" id="O94842">
    <property type="expression patterns" value="baseline and differential"/>
</dbReference>
<dbReference type="GO" id="GO:0000785">
    <property type="term" value="C:chromatin"/>
    <property type="evidence" value="ECO:0000314"/>
    <property type="project" value="UniProtKB"/>
</dbReference>
<dbReference type="GO" id="GO:0005634">
    <property type="term" value="C:nucleus"/>
    <property type="evidence" value="ECO:0000318"/>
    <property type="project" value="GO_Central"/>
</dbReference>
<dbReference type="GO" id="GO:0072357">
    <property type="term" value="C:PTW/PP1 phosphatase complex"/>
    <property type="evidence" value="ECO:0000314"/>
    <property type="project" value="UniProtKB"/>
</dbReference>
<dbReference type="GO" id="GO:0031490">
    <property type="term" value="F:chromatin DNA binding"/>
    <property type="evidence" value="ECO:0000318"/>
    <property type="project" value="GO_Central"/>
</dbReference>
<dbReference type="GO" id="GO:0032968">
    <property type="term" value="P:positive regulation of transcription elongation by RNA polymerase II"/>
    <property type="evidence" value="ECO:0000314"/>
    <property type="project" value="UniProtKB"/>
</dbReference>
<dbReference type="GO" id="GO:0006357">
    <property type="term" value="P:regulation of transcription by RNA polymerase II"/>
    <property type="evidence" value="ECO:0000318"/>
    <property type="project" value="GO_Central"/>
</dbReference>
<dbReference type="GO" id="GO:0001111">
    <property type="term" value="P:RNA polymerase II promoter clearance"/>
    <property type="evidence" value="ECO:0000314"/>
    <property type="project" value="UniProtKB"/>
</dbReference>
<dbReference type="CDD" id="cd21995">
    <property type="entry name" value="HMG-box_TOX-like"/>
    <property type="match status" value="1"/>
</dbReference>
<dbReference type="FunFam" id="1.10.30.10:FF:000005">
    <property type="entry name" value="TOX high mobility group box family member 3"/>
    <property type="match status" value="1"/>
</dbReference>
<dbReference type="Gene3D" id="1.10.30.10">
    <property type="entry name" value="High mobility group box domain"/>
    <property type="match status" value="1"/>
</dbReference>
<dbReference type="InterPro" id="IPR009071">
    <property type="entry name" value="HMG_box_dom"/>
</dbReference>
<dbReference type="InterPro" id="IPR036910">
    <property type="entry name" value="HMG_box_dom_sf"/>
</dbReference>
<dbReference type="InterPro" id="IPR051365">
    <property type="entry name" value="TOX_HMG-box_domain"/>
</dbReference>
<dbReference type="PANTHER" id="PTHR45781">
    <property type="entry name" value="AGAP000281-PA"/>
    <property type="match status" value="1"/>
</dbReference>
<dbReference type="PANTHER" id="PTHR45781:SF2">
    <property type="entry name" value="TOX HIGH MOBILITY GROUP BOX FAMILY MEMBER 4"/>
    <property type="match status" value="1"/>
</dbReference>
<dbReference type="Pfam" id="PF00505">
    <property type="entry name" value="HMG_box"/>
    <property type="match status" value="1"/>
</dbReference>
<dbReference type="PRINTS" id="PR00886">
    <property type="entry name" value="HIGHMOBLTY12"/>
</dbReference>
<dbReference type="SMART" id="SM00398">
    <property type="entry name" value="HMG"/>
    <property type="match status" value="1"/>
</dbReference>
<dbReference type="SUPFAM" id="SSF47095">
    <property type="entry name" value="HMG-box"/>
    <property type="match status" value="1"/>
</dbReference>
<dbReference type="PROSITE" id="PS50118">
    <property type="entry name" value="HMG_BOX_2"/>
    <property type="match status" value="1"/>
</dbReference>
<sequence>MEFPGGNDNYLTITGPSHPFLSGAETFHTPSLGDEEFEIPPISLDSDPSLAVSDVVGHFDDLADPSSSQDGSFSAQYGVQTLDMPVGMTHGLMEQGGGLLSGGLTMDLDHSIGTQYSANPPVTIDVPMTDMTSGLMGHSQLTTIDQSELSSQLGLSLGGGTILPPAQSPEDRLSTTPSPTSSLHEDGVEDFRRQLPSQKTVVVEAGKKQKAPKKRKKKDPNEPQKPVSAYALFFRDTQAAIKGQNPNATFGEVSKIVASMWDSLGEEQKQVYKRKTEAAKKEYLKALAAYKDNQECQATVETVELDPAPPSQTPSPPPMATVDPASPAPASIEPPALSPSIVVNSTLSSYVANQASSGAGGQPNITKLIITKQMLPSSITMSQGGMVTVIPATVVTSRGLQLGQTSTATIQPSQQAQIVTRSVLQAAAAAAAAASMQLPPPRLQPPPLQQMPQPPTQQQVTILQQPPPLQAMQQPPPQKVRINLQQQPPPLQIKSVPLPTLKMQTTLVPPTVESSPERPMNNSPEAHTVEAPSPETICEMITDVVPEVESPSQMDVELVSGSPVALSPQPRCVRSGCENPPIVSKDWDNEYCSNECVVKHCRDVFLAWVASRNSNTVVFVK</sequence>
<name>TOX4_HUMAN</name>
<protein>
    <recommendedName>
        <fullName evidence="12">TOX high mobility group box family member 4</fullName>
    </recommendedName>
</protein>
<gene>
    <name evidence="10 14" type="primary">TOX4</name>
    <name type="synonym">C14orf92</name>
    <name evidence="11" type="synonym">KIAA0737</name>
</gene>
<feature type="chain" id="PRO_0000048568" description="TOX high mobility group box family member 4">
    <location>
        <begin position="1"/>
        <end position="621"/>
    </location>
</feature>
<feature type="DNA-binding region" description="HMG box" evidence="3">
    <location>
        <begin position="223"/>
        <end position="291"/>
    </location>
</feature>
<feature type="region of interest" description="Disordered" evidence="4">
    <location>
        <begin position="153"/>
        <end position="227"/>
    </location>
</feature>
<feature type="region of interest" description="Disordered" evidence="4">
    <location>
        <begin position="305"/>
        <end position="333"/>
    </location>
</feature>
<feature type="region of interest" description="Disordered" evidence="4">
    <location>
        <begin position="510"/>
        <end position="529"/>
    </location>
</feature>
<feature type="short sequence motif" description="Nuclear localization signal" evidence="2">
    <location>
        <begin position="213"/>
        <end position="218"/>
    </location>
</feature>
<feature type="compositionally biased region" description="Basic and acidic residues" evidence="4">
    <location>
        <begin position="183"/>
        <end position="193"/>
    </location>
</feature>
<feature type="compositionally biased region" description="Basic residues" evidence="4">
    <location>
        <begin position="208"/>
        <end position="218"/>
    </location>
</feature>
<feature type="compositionally biased region" description="Pro residues" evidence="4">
    <location>
        <begin position="307"/>
        <end position="319"/>
    </location>
</feature>
<feature type="compositionally biased region" description="Low complexity" evidence="4">
    <location>
        <begin position="320"/>
        <end position="333"/>
    </location>
</feature>
<feature type="compositionally biased region" description="Polar residues" evidence="4">
    <location>
        <begin position="510"/>
        <end position="525"/>
    </location>
</feature>
<feature type="modified residue" description="Phosphothreonine" evidence="1">
    <location>
        <position position="176"/>
    </location>
</feature>
<feature type="modified residue" description="Phosphoserine" evidence="15 19">
    <location>
        <position position="178"/>
    </location>
</feature>
<feature type="modified residue" description="Phosphoserine" evidence="17">
    <location>
        <position position="181"/>
    </location>
</feature>
<feature type="modified residue" description="Phosphoserine" evidence="15 17 19">
    <location>
        <position position="182"/>
    </location>
</feature>
<feature type="modified residue" description="Phosphothreonine" evidence="16">
    <location>
        <position position="313"/>
    </location>
</feature>
<feature type="modified residue" description="Phosphoserine" evidence="16">
    <location>
        <position position="315"/>
    </location>
</feature>
<feature type="modified residue" description="Asymmetric dimethylarginine" evidence="18">
    <location>
        <position position="481"/>
    </location>
</feature>
<feature type="modified residue" description="Phosphoserine" evidence="19">
    <location>
        <position position="533"/>
    </location>
</feature>
<feature type="modified residue" description="Phosphoserine" evidence="19">
    <location>
        <position position="550"/>
    </location>
</feature>
<feature type="modified residue" description="Phosphoserine" evidence="19">
    <location>
        <position position="552"/>
    </location>
</feature>
<feature type="modified residue" description="Phosphoserine" evidence="19">
    <location>
        <position position="560"/>
    </location>
</feature>
<feature type="modified residue" description="Phosphoserine" evidence="19">
    <location>
        <position position="562"/>
    </location>
</feature>
<feature type="modified residue" description="Phosphoserine" evidence="19">
    <location>
        <position position="567"/>
    </location>
</feature>
<feature type="splice variant" id="VSP_053873" description="In isoform 2." evidence="9">
    <original>MEFPGGNDNYLTITGPSHPFLSGA</original>
    <variation>M</variation>
    <location>
        <begin position="1"/>
        <end position="24"/>
    </location>
</feature>
<feature type="splice variant" id="VSP_055512" description="In isoform 3." evidence="9">
    <location>
        <begin position="82"/>
        <end position="107"/>
    </location>
</feature>
<feature type="sequence conflict" description="In Ref. 2; BAG61682." evidence="12" ref="2">
    <original>V</original>
    <variation>I</variation>
    <location>
        <position position="271"/>
    </location>
</feature>